<proteinExistence type="inferred from homology"/>
<feature type="chain" id="PRO_0000053435" description="Thyroid hormone receptor alpha">
    <location>
        <begin position="1" status="less than"/>
        <end position="218"/>
    </location>
</feature>
<feature type="domain" description="NR LBD" evidence="2">
    <location>
        <begin position="1" status="less than"/>
        <end position="215"/>
    </location>
</feature>
<feature type="binding site" evidence="1">
    <location>
        <position position="36"/>
    </location>
    <ligand>
        <name>3,3',5-triiodo-L-thyronine</name>
        <dbReference type="ChEBI" id="CHEBI:533015"/>
    </ligand>
</feature>
<feature type="binding site" evidence="1">
    <location>
        <position position="85"/>
    </location>
    <ligand>
        <name>3,3',5-triiodo-L-thyronine</name>
        <dbReference type="ChEBI" id="CHEBI:533015"/>
    </ligand>
</feature>
<feature type="non-terminal residue">
    <location>
        <position position="1"/>
    </location>
</feature>
<dbReference type="EMBL" id="AH007700">
    <property type="protein sequence ID" value="AAD30058.1"/>
    <property type="molecule type" value="Genomic_DNA"/>
</dbReference>
<dbReference type="SMR" id="Q9W6I9"/>
<dbReference type="Proteomes" id="UP000694395">
    <property type="component" value="Unplaced"/>
</dbReference>
<dbReference type="GO" id="GO:0090575">
    <property type="term" value="C:RNA polymerase II transcription regulator complex"/>
    <property type="evidence" value="ECO:0007669"/>
    <property type="project" value="TreeGrafter"/>
</dbReference>
<dbReference type="GO" id="GO:0004879">
    <property type="term" value="F:nuclear receptor activity"/>
    <property type="evidence" value="ECO:0000250"/>
    <property type="project" value="UniProtKB"/>
</dbReference>
<dbReference type="GO" id="GO:0000978">
    <property type="term" value="F:RNA polymerase II cis-regulatory region sequence-specific DNA binding"/>
    <property type="evidence" value="ECO:0007669"/>
    <property type="project" value="TreeGrafter"/>
</dbReference>
<dbReference type="GO" id="GO:0070324">
    <property type="term" value="F:thyroid hormone binding"/>
    <property type="evidence" value="ECO:0000250"/>
    <property type="project" value="UniProtKB"/>
</dbReference>
<dbReference type="GO" id="GO:0008270">
    <property type="term" value="F:zinc ion binding"/>
    <property type="evidence" value="ECO:0007669"/>
    <property type="project" value="UniProtKB-KW"/>
</dbReference>
<dbReference type="GO" id="GO:0030154">
    <property type="term" value="P:cell differentiation"/>
    <property type="evidence" value="ECO:0007669"/>
    <property type="project" value="TreeGrafter"/>
</dbReference>
<dbReference type="GO" id="GO:0000122">
    <property type="term" value="P:negative regulation of transcription by RNA polymerase II"/>
    <property type="evidence" value="ECO:0007669"/>
    <property type="project" value="TreeGrafter"/>
</dbReference>
<dbReference type="GO" id="GO:0045944">
    <property type="term" value="P:positive regulation of transcription by RNA polymerase II"/>
    <property type="evidence" value="ECO:0007669"/>
    <property type="project" value="TreeGrafter"/>
</dbReference>
<dbReference type="GO" id="GO:0048384">
    <property type="term" value="P:retinoic acid receptor signaling pathway"/>
    <property type="evidence" value="ECO:0007669"/>
    <property type="project" value="TreeGrafter"/>
</dbReference>
<dbReference type="GO" id="GO:0002154">
    <property type="term" value="P:thyroid hormone receptor signaling pathway"/>
    <property type="evidence" value="ECO:0007669"/>
    <property type="project" value="TreeGrafter"/>
</dbReference>
<dbReference type="CDD" id="cd06935">
    <property type="entry name" value="NR_LBD_TR"/>
    <property type="match status" value="1"/>
</dbReference>
<dbReference type="FunFam" id="1.10.565.10:FF:000006">
    <property type="entry name" value="Thyroid hormone receptor beta 2"/>
    <property type="match status" value="1"/>
</dbReference>
<dbReference type="Gene3D" id="1.10.565.10">
    <property type="entry name" value="Retinoid X Receptor"/>
    <property type="match status" value="1"/>
</dbReference>
<dbReference type="InterPro" id="IPR035500">
    <property type="entry name" value="NHR-like_dom_sf"/>
</dbReference>
<dbReference type="InterPro" id="IPR000536">
    <property type="entry name" value="Nucl_hrmn_rcpt_lig-bd"/>
</dbReference>
<dbReference type="InterPro" id="IPR050234">
    <property type="entry name" value="Nuclear_hormone_rcpt_NR1"/>
</dbReference>
<dbReference type="InterPro" id="IPR001723">
    <property type="entry name" value="Nuclear_hrmn_rcpt"/>
</dbReference>
<dbReference type="InterPro" id="IPR001728">
    <property type="entry name" value="ThyrH_rcpt"/>
</dbReference>
<dbReference type="PANTHER" id="PTHR24082">
    <property type="entry name" value="NUCLEAR HORMONE RECEPTOR"/>
    <property type="match status" value="1"/>
</dbReference>
<dbReference type="PANTHER" id="PTHR24082:SF42">
    <property type="entry name" value="THYROID HORMONE RECEPTOR ALPHA"/>
    <property type="match status" value="1"/>
</dbReference>
<dbReference type="Pfam" id="PF00104">
    <property type="entry name" value="Hormone_recep"/>
    <property type="match status" value="1"/>
</dbReference>
<dbReference type="PRINTS" id="PR00398">
    <property type="entry name" value="STRDHORMONER"/>
</dbReference>
<dbReference type="PRINTS" id="PR00546">
    <property type="entry name" value="THYROIDHORMR"/>
</dbReference>
<dbReference type="SMART" id="SM00430">
    <property type="entry name" value="HOLI"/>
    <property type="match status" value="1"/>
</dbReference>
<dbReference type="SUPFAM" id="SSF48508">
    <property type="entry name" value="Nuclear receptor ligand-binding domain"/>
    <property type="match status" value="1"/>
</dbReference>
<dbReference type="PROSITE" id="PS51843">
    <property type="entry name" value="NR_LBD"/>
    <property type="match status" value="1"/>
</dbReference>
<accession>Q9W6I9</accession>
<reference key="1">
    <citation type="submission" date="1999-03" db="EMBL/GenBank/DDBJ databases">
        <title>Cloning and characterisation of a rainbow trout thyroid hormone receptor.</title>
        <authorList>
            <person name="Jones I."/>
            <person name="Sweeney G.E."/>
            <person name="Kille P."/>
            <person name="Wigham T."/>
        </authorList>
    </citation>
    <scope>NUCLEOTIDE SEQUENCE [GENOMIC DNA]</scope>
</reference>
<keyword id="KW-0238">DNA-binding</keyword>
<keyword id="KW-0479">Metal-binding</keyword>
<keyword id="KW-0539">Nucleus</keyword>
<keyword id="KW-0675">Receptor</keyword>
<keyword id="KW-0804">Transcription</keyword>
<keyword id="KW-0805">Transcription regulation</keyword>
<keyword id="KW-0862">Zinc</keyword>
<keyword id="KW-0863">Zinc-finger</keyword>
<comment type="function">
    <text>Nuclear hormone receptor that can act as a repressor or activator of transcription. High affinity receptor for thyroid hormones, including triiodothyronine and thyroxine.</text>
</comment>
<comment type="subcellular location">
    <subcellularLocation>
        <location>Nucleus</location>
    </subcellularLocation>
</comment>
<comment type="domain">
    <text>Composed of three domains: a modulating N-terminal domain, a DNA-binding domain and a C-terminal ligand-binding domain.</text>
</comment>
<comment type="similarity">
    <text evidence="3">Belongs to the nuclear hormone receptor family. NR1 subfamily.</text>
</comment>
<organism>
    <name type="scientific">Oncorhynchus mykiss</name>
    <name type="common">Rainbow trout</name>
    <name type="synonym">Salmo gairdneri</name>
    <dbReference type="NCBI Taxonomy" id="8022"/>
    <lineage>
        <taxon>Eukaryota</taxon>
        <taxon>Metazoa</taxon>
        <taxon>Chordata</taxon>
        <taxon>Craniata</taxon>
        <taxon>Vertebrata</taxon>
        <taxon>Euteleostomi</taxon>
        <taxon>Actinopterygii</taxon>
        <taxon>Neopterygii</taxon>
        <taxon>Teleostei</taxon>
        <taxon>Protacanthopterygii</taxon>
        <taxon>Salmoniformes</taxon>
        <taxon>Salmonidae</taxon>
        <taxon>Salmoninae</taxon>
        <taxon>Oncorhynchus</taxon>
    </lineage>
</organism>
<gene>
    <name type="primary">thra</name>
    <name type="synonym">nr1a1</name>
</gene>
<sequence length="218" mass="24485">PEDIGQSPGVPTPDGDKVDLEAFSEFTKIITPAITRVVDFAKKLPMFSELPCEDQIILLKGCCMEIMSLRAAVRYDPESETLTLSGEMAVKREQLKNGGLGVVSDAIFDLGKSLAQFNLDDSEVALLQAVLLMSSDRSGLTSVDKIEKCQETYLLAFEHYINHRKHNIPHFWPKLLMKVTDLRMIGACHASRFLHMKVECPNELFPPLFLEVFEDQEV</sequence>
<name>THA_ONCMY</name>
<protein>
    <recommendedName>
        <fullName>Thyroid hormone receptor alpha</fullName>
    </recommendedName>
    <alternativeName>
        <fullName>Nuclear receptor subfamily 1 group A member 1</fullName>
    </alternativeName>
</protein>
<evidence type="ECO:0000250" key="1">
    <source>
        <dbReference type="UniProtKB" id="P10827"/>
    </source>
</evidence>
<evidence type="ECO:0000255" key="2">
    <source>
        <dbReference type="PROSITE-ProRule" id="PRU01189"/>
    </source>
</evidence>
<evidence type="ECO:0000305" key="3"/>